<evidence type="ECO:0000255" key="1">
    <source>
        <dbReference type="HAMAP-Rule" id="MF_00385"/>
    </source>
</evidence>
<evidence type="ECO:0000305" key="2"/>
<sequence>MALKIRLRQQGRRNHVVYRLVLADVESPRDGRYIELLGWYDPHSTVNYQLKSERIFHWLNQGAELTEKAAVLIKQGAPGVYSELMAKKMTRKAVMCQKRRAYRQRRSLKRAETAQAVSK</sequence>
<proteinExistence type="inferred from homology"/>
<reference key="1">
    <citation type="journal article" date="2006" name="DNA Res.">
        <title>Genome sequence of the cat pathogen, Chlamydophila felis.</title>
        <authorList>
            <person name="Azuma Y."/>
            <person name="Hirakawa H."/>
            <person name="Yamashita A."/>
            <person name="Cai Y."/>
            <person name="Rahman M.A."/>
            <person name="Suzuki H."/>
            <person name="Mitaku S."/>
            <person name="Toh H."/>
            <person name="Goto S."/>
            <person name="Murakami T."/>
            <person name="Sugi K."/>
            <person name="Hayashi H."/>
            <person name="Fukushi H."/>
            <person name="Hattori M."/>
            <person name="Kuhara S."/>
            <person name="Shirai M."/>
        </authorList>
    </citation>
    <scope>NUCLEOTIDE SEQUENCE [LARGE SCALE GENOMIC DNA]</scope>
    <source>
        <strain>Fe/C-56</strain>
    </source>
</reference>
<organism>
    <name type="scientific">Chlamydia felis (strain Fe/C-56)</name>
    <name type="common">Chlamydophila felis</name>
    <dbReference type="NCBI Taxonomy" id="264202"/>
    <lineage>
        <taxon>Bacteria</taxon>
        <taxon>Pseudomonadati</taxon>
        <taxon>Chlamydiota</taxon>
        <taxon>Chlamydiia</taxon>
        <taxon>Chlamydiales</taxon>
        <taxon>Chlamydiaceae</taxon>
        <taxon>Chlamydia/Chlamydophila group</taxon>
        <taxon>Chlamydia</taxon>
    </lineage>
</organism>
<dbReference type="EMBL" id="AP006861">
    <property type="protein sequence ID" value="BAE81126.1"/>
    <property type="molecule type" value="Genomic_DNA"/>
</dbReference>
<dbReference type="RefSeq" id="WP_011457906.1">
    <property type="nucleotide sequence ID" value="NC_007899.1"/>
</dbReference>
<dbReference type="SMR" id="Q255B2"/>
<dbReference type="STRING" id="264202.CF0354"/>
<dbReference type="KEGG" id="cfe:CF0354"/>
<dbReference type="eggNOG" id="COG0228">
    <property type="taxonomic scope" value="Bacteria"/>
</dbReference>
<dbReference type="HOGENOM" id="CLU_100590_3_1_0"/>
<dbReference type="OrthoDB" id="9807878at2"/>
<dbReference type="Proteomes" id="UP000001260">
    <property type="component" value="Chromosome"/>
</dbReference>
<dbReference type="GO" id="GO:0005737">
    <property type="term" value="C:cytoplasm"/>
    <property type="evidence" value="ECO:0007669"/>
    <property type="project" value="UniProtKB-ARBA"/>
</dbReference>
<dbReference type="GO" id="GO:0015935">
    <property type="term" value="C:small ribosomal subunit"/>
    <property type="evidence" value="ECO:0007669"/>
    <property type="project" value="TreeGrafter"/>
</dbReference>
<dbReference type="GO" id="GO:0003735">
    <property type="term" value="F:structural constituent of ribosome"/>
    <property type="evidence" value="ECO:0007669"/>
    <property type="project" value="InterPro"/>
</dbReference>
<dbReference type="GO" id="GO:0006412">
    <property type="term" value="P:translation"/>
    <property type="evidence" value="ECO:0007669"/>
    <property type="project" value="UniProtKB-UniRule"/>
</dbReference>
<dbReference type="Gene3D" id="3.30.1320.10">
    <property type="match status" value="1"/>
</dbReference>
<dbReference type="HAMAP" id="MF_00385">
    <property type="entry name" value="Ribosomal_bS16"/>
    <property type="match status" value="1"/>
</dbReference>
<dbReference type="InterPro" id="IPR000307">
    <property type="entry name" value="Ribosomal_bS16"/>
</dbReference>
<dbReference type="InterPro" id="IPR023803">
    <property type="entry name" value="Ribosomal_bS16_dom_sf"/>
</dbReference>
<dbReference type="NCBIfam" id="NF011095">
    <property type="entry name" value="PRK14522.1"/>
    <property type="match status" value="1"/>
</dbReference>
<dbReference type="NCBIfam" id="TIGR00002">
    <property type="entry name" value="S16"/>
    <property type="match status" value="1"/>
</dbReference>
<dbReference type="PANTHER" id="PTHR12919">
    <property type="entry name" value="30S RIBOSOMAL PROTEIN S16"/>
    <property type="match status" value="1"/>
</dbReference>
<dbReference type="PANTHER" id="PTHR12919:SF20">
    <property type="entry name" value="SMALL RIBOSOMAL SUBUNIT PROTEIN BS16M"/>
    <property type="match status" value="1"/>
</dbReference>
<dbReference type="Pfam" id="PF00886">
    <property type="entry name" value="Ribosomal_S16"/>
    <property type="match status" value="1"/>
</dbReference>
<dbReference type="SUPFAM" id="SSF54565">
    <property type="entry name" value="Ribosomal protein S16"/>
    <property type="match status" value="1"/>
</dbReference>
<keyword id="KW-0687">Ribonucleoprotein</keyword>
<keyword id="KW-0689">Ribosomal protein</keyword>
<protein>
    <recommendedName>
        <fullName evidence="1">Small ribosomal subunit protein bS16</fullName>
    </recommendedName>
    <alternativeName>
        <fullName evidence="2">30S ribosomal protein S16</fullName>
    </alternativeName>
</protein>
<name>RS16_CHLFF</name>
<accession>Q255B2</accession>
<feature type="chain" id="PRO_0000243794" description="Small ribosomal subunit protein bS16">
    <location>
        <begin position="1"/>
        <end position="119"/>
    </location>
</feature>
<comment type="similarity">
    <text evidence="1">Belongs to the bacterial ribosomal protein bS16 family.</text>
</comment>
<gene>
    <name evidence="1" type="primary">rpsP</name>
    <name type="ordered locus">CF0354</name>
</gene>